<sequence>MPNRYYEKDGNLDFLAGRTVAIIGYGSQGHAHALNLRDSGVDVVVGLPAGSKSTAKAEAAGLKVLSPADAAKTANVVMILVPDHIQADLYNNEIAPHMTAGKTLMFAHGFNIHFGQIKPPVDIDVTMVAPKAPGHRVRELYTEGVGVPALVAVHQNATGQALERALAYALALGCLKAGVIDTNFREETESDLFGEQAVLCGGAAELVRAGFQTLVDAGYAPEIAYFECLHELKLIVDLIQEGGLSYMRYSVSDTAEYGDYTRGPRVVNDQTRAEMKKILSEIQSGEFARQWIEENKTGRKNFLAMREKGHNDQIEVVGRELREMMTFLKKKKEVGVPVA</sequence>
<gene>
    <name evidence="1" type="primary">ilvC</name>
    <name type="ordered locus">Acid_0178</name>
</gene>
<reference key="1">
    <citation type="journal article" date="2009" name="Appl. Environ. Microbiol.">
        <title>Three genomes from the phylum Acidobacteria provide insight into the lifestyles of these microorganisms in soils.</title>
        <authorList>
            <person name="Ward N.L."/>
            <person name="Challacombe J.F."/>
            <person name="Janssen P.H."/>
            <person name="Henrissat B."/>
            <person name="Coutinho P.M."/>
            <person name="Wu M."/>
            <person name="Xie G."/>
            <person name="Haft D.H."/>
            <person name="Sait M."/>
            <person name="Badger J."/>
            <person name="Barabote R.D."/>
            <person name="Bradley B."/>
            <person name="Brettin T.S."/>
            <person name="Brinkac L.M."/>
            <person name="Bruce D."/>
            <person name="Creasy T."/>
            <person name="Daugherty S.C."/>
            <person name="Davidsen T.M."/>
            <person name="DeBoy R.T."/>
            <person name="Detter J.C."/>
            <person name="Dodson R.J."/>
            <person name="Durkin A.S."/>
            <person name="Ganapathy A."/>
            <person name="Gwinn-Giglio M."/>
            <person name="Han C.S."/>
            <person name="Khouri H."/>
            <person name="Kiss H."/>
            <person name="Kothari S.P."/>
            <person name="Madupu R."/>
            <person name="Nelson K.E."/>
            <person name="Nelson W.C."/>
            <person name="Paulsen I."/>
            <person name="Penn K."/>
            <person name="Ren Q."/>
            <person name="Rosovitz M.J."/>
            <person name="Selengut J.D."/>
            <person name="Shrivastava S."/>
            <person name="Sullivan S.A."/>
            <person name="Tapia R."/>
            <person name="Thompson L.S."/>
            <person name="Watkins K.L."/>
            <person name="Yang Q."/>
            <person name="Yu C."/>
            <person name="Zafar N."/>
            <person name="Zhou L."/>
            <person name="Kuske C.R."/>
        </authorList>
    </citation>
    <scope>NUCLEOTIDE SEQUENCE [LARGE SCALE GENOMIC DNA]</scope>
    <source>
        <strain>Ellin6076</strain>
    </source>
</reference>
<organism>
    <name type="scientific">Solibacter usitatus (strain Ellin6076)</name>
    <dbReference type="NCBI Taxonomy" id="234267"/>
    <lineage>
        <taxon>Bacteria</taxon>
        <taxon>Pseudomonadati</taxon>
        <taxon>Acidobacteriota</taxon>
        <taxon>Terriglobia</taxon>
        <taxon>Bryobacterales</taxon>
        <taxon>Solibacteraceae</taxon>
        <taxon>Candidatus Solibacter</taxon>
    </lineage>
</organism>
<dbReference type="EC" id="1.1.1.86" evidence="1"/>
<dbReference type="EMBL" id="CP000473">
    <property type="protein sequence ID" value="ABJ81192.1"/>
    <property type="molecule type" value="Genomic_DNA"/>
</dbReference>
<dbReference type="SMR" id="Q02CM4"/>
<dbReference type="FunCoup" id="Q02CM4">
    <property type="interactions" value="587"/>
</dbReference>
<dbReference type="STRING" id="234267.Acid_0178"/>
<dbReference type="KEGG" id="sus:Acid_0178"/>
<dbReference type="eggNOG" id="COG0059">
    <property type="taxonomic scope" value="Bacteria"/>
</dbReference>
<dbReference type="HOGENOM" id="CLU_033821_0_1_0"/>
<dbReference type="InParanoid" id="Q02CM4"/>
<dbReference type="OrthoDB" id="9804088at2"/>
<dbReference type="UniPathway" id="UPA00047">
    <property type="reaction ID" value="UER00056"/>
</dbReference>
<dbReference type="UniPathway" id="UPA00049">
    <property type="reaction ID" value="UER00060"/>
</dbReference>
<dbReference type="GO" id="GO:0005829">
    <property type="term" value="C:cytosol"/>
    <property type="evidence" value="ECO:0007669"/>
    <property type="project" value="TreeGrafter"/>
</dbReference>
<dbReference type="GO" id="GO:0004455">
    <property type="term" value="F:ketol-acid reductoisomerase activity"/>
    <property type="evidence" value="ECO:0007669"/>
    <property type="project" value="UniProtKB-UniRule"/>
</dbReference>
<dbReference type="GO" id="GO:0000287">
    <property type="term" value="F:magnesium ion binding"/>
    <property type="evidence" value="ECO:0007669"/>
    <property type="project" value="UniProtKB-UniRule"/>
</dbReference>
<dbReference type="GO" id="GO:0050661">
    <property type="term" value="F:NADP binding"/>
    <property type="evidence" value="ECO:0007669"/>
    <property type="project" value="InterPro"/>
</dbReference>
<dbReference type="GO" id="GO:0009097">
    <property type="term" value="P:isoleucine biosynthetic process"/>
    <property type="evidence" value="ECO:0007669"/>
    <property type="project" value="UniProtKB-UniRule"/>
</dbReference>
<dbReference type="GO" id="GO:0009099">
    <property type="term" value="P:L-valine biosynthetic process"/>
    <property type="evidence" value="ECO:0007669"/>
    <property type="project" value="UniProtKB-UniRule"/>
</dbReference>
<dbReference type="FunFam" id="3.40.50.720:FF:000023">
    <property type="entry name" value="Ketol-acid reductoisomerase (NADP(+))"/>
    <property type="match status" value="1"/>
</dbReference>
<dbReference type="Gene3D" id="6.10.240.10">
    <property type="match status" value="1"/>
</dbReference>
<dbReference type="Gene3D" id="3.40.50.720">
    <property type="entry name" value="NAD(P)-binding Rossmann-like Domain"/>
    <property type="match status" value="1"/>
</dbReference>
<dbReference type="HAMAP" id="MF_00435">
    <property type="entry name" value="IlvC"/>
    <property type="match status" value="1"/>
</dbReference>
<dbReference type="InterPro" id="IPR008927">
    <property type="entry name" value="6-PGluconate_DH-like_C_sf"/>
</dbReference>
<dbReference type="InterPro" id="IPR013023">
    <property type="entry name" value="KARI"/>
</dbReference>
<dbReference type="InterPro" id="IPR000506">
    <property type="entry name" value="KARI_C"/>
</dbReference>
<dbReference type="InterPro" id="IPR013116">
    <property type="entry name" value="KARI_N"/>
</dbReference>
<dbReference type="InterPro" id="IPR014359">
    <property type="entry name" value="KARI_prok"/>
</dbReference>
<dbReference type="InterPro" id="IPR036291">
    <property type="entry name" value="NAD(P)-bd_dom_sf"/>
</dbReference>
<dbReference type="NCBIfam" id="TIGR00465">
    <property type="entry name" value="ilvC"/>
    <property type="match status" value="1"/>
</dbReference>
<dbReference type="NCBIfam" id="NF004017">
    <property type="entry name" value="PRK05479.1"/>
    <property type="match status" value="1"/>
</dbReference>
<dbReference type="NCBIfam" id="NF009940">
    <property type="entry name" value="PRK13403.1"/>
    <property type="match status" value="1"/>
</dbReference>
<dbReference type="PANTHER" id="PTHR21371">
    <property type="entry name" value="KETOL-ACID REDUCTOISOMERASE, MITOCHONDRIAL"/>
    <property type="match status" value="1"/>
</dbReference>
<dbReference type="PANTHER" id="PTHR21371:SF1">
    <property type="entry name" value="KETOL-ACID REDUCTOISOMERASE, MITOCHONDRIAL"/>
    <property type="match status" value="1"/>
</dbReference>
<dbReference type="Pfam" id="PF01450">
    <property type="entry name" value="KARI_C"/>
    <property type="match status" value="1"/>
</dbReference>
<dbReference type="Pfam" id="PF07991">
    <property type="entry name" value="KARI_N"/>
    <property type="match status" value="1"/>
</dbReference>
<dbReference type="PIRSF" id="PIRSF000116">
    <property type="entry name" value="IlvC_gammaproteo"/>
    <property type="match status" value="1"/>
</dbReference>
<dbReference type="SUPFAM" id="SSF48179">
    <property type="entry name" value="6-phosphogluconate dehydrogenase C-terminal domain-like"/>
    <property type="match status" value="1"/>
</dbReference>
<dbReference type="SUPFAM" id="SSF51735">
    <property type="entry name" value="NAD(P)-binding Rossmann-fold domains"/>
    <property type="match status" value="1"/>
</dbReference>
<dbReference type="PROSITE" id="PS51851">
    <property type="entry name" value="KARI_C"/>
    <property type="match status" value="1"/>
</dbReference>
<dbReference type="PROSITE" id="PS51850">
    <property type="entry name" value="KARI_N"/>
    <property type="match status" value="1"/>
</dbReference>
<feature type="chain" id="PRO_1000050575" description="Ketol-acid reductoisomerase (NADP(+))">
    <location>
        <begin position="1"/>
        <end position="339"/>
    </location>
</feature>
<feature type="domain" description="KARI N-terminal Rossmann" evidence="2">
    <location>
        <begin position="1"/>
        <end position="182"/>
    </location>
</feature>
<feature type="domain" description="KARI C-terminal knotted" evidence="3">
    <location>
        <begin position="183"/>
        <end position="328"/>
    </location>
</feature>
<feature type="active site" evidence="1">
    <location>
        <position position="108"/>
    </location>
</feature>
<feature type="binding site" evidence="1">
    <location>
        <begin position="25"/>
        <end position="28"/>
    </location>
    <ligand>
        <name>NADP(+)</name>
        <dbReference type="ChEBI" id="CHEBI:58349"/>
    </ligand>
</feature>
<feature type="binding site" evidence="1">
    <location>
        <position position="51"/>
    </location>
    <ligand>
        <name>NADP(+)</name>
        <dbReference type="ChEBI" id="CHEBI:58349"/>
    </ligand>
</feature>
<feature type="binding site" evidence="1">
    <location>
        <position position="53"/>
    </location>
    <ligand>
        <name>NADP(+)</name>
        <dbReference type="ChEBI" id="CHEBI:58349"/>
    </ligand>
</feature>
<feature type="binding site" evidence="1">
    <location>
        <begin position="83"/>
        <end position="86"/>
    </location>
    <ligand>
        <name>NADP(+)</name>
        <dbReference type="ChEBI" id="CHEBI:58349"/>
    </ligand>
</feature>
<feature type="binding site" evidence="1">
    <location>
        <position position="134"/>
    </location>
    <ligand>
        <name>NADP(+)</name>
        <dbReference type="ChEBI" id="CHEBI:58349"/>
    </ligand>
</feature>
<feature type="binding site" evidence="1">
    <location>
        <position position="191"/>
    </location>
    <ligand>
        <name>Mg(2+)</name>
        <dbReference type="ChEBI" id="CHEBI:18420"/>
        <label>1</label>
    </ligand>
</feature>
<feature type="binding site" evidence="1">
    <location>
        <position position="191"/>
    </location>
    <ligand>
        <name>Mg(2+)</name>
        <dbReference type="ChEBI" id="CHEBI:18420"/>
        <label>2</label>
    </ligand>
</feature>
<feature type="binding site" evidence="1">
    <location>
        <position position="195"/>
    </location>
    <ligand>
        <name>Mg(2+)</name>
        <dbReference type="ChEBI" id="CHEBI:18420"/>
        <label>1</label>
    </ligand>
</feature>
<feature type="binding site" evidence="1">
    <location>
        <position position="227"/>
    </location>
    <ligand>
        <name>Mg(2+)</name>
        <dbReference type="ChEBI" id="CHEBI:18420"/>
        <label>2</label>
    </ligand>
</feature>
<feature type="binding site" evidence="1">
    <location>
        <position position="231"/>
    </location>
    <ligand>
        <name>Mg(2+)</name>
        <dbReference type="ChEBI" id="CHEBI:18420"/>
        <label>2</label>
    </ligand>
</feature>
<feature type="binding site" evidence="1">
    <location>
        <position position="252"/>
    </location>
    <ligand>
        <name>substrate</name>
    </ligand>
</feature>
<accession>Q02CM4</accession>
<comment type="function">
    <text evidence="1">Involved in the biosynthesis of branched-chain amino acids (BCAA). Catalyzes an alkyl-migration followed by a ketol-acid reduction of (S)-2-acetolactate (S2AL) to yield (R)-2,3-dihydroxy-isovalerate. In the isomerase reaction, S2AL is rearranged via a Mg-dependent methyl migration to produce 3-hydroxy-3-methyl-2-ketobutyrate (HMKB). In the reductase reaction, this 2-ketoacid undergoes a metal-dependent reduction by NADPH to yield (R)-2,3-dihydroxy-isovalerate.</text>
</comment>
<comment type="catalytic activity">
    <reaction evidence="1">
        <text>(2R)-2,3-dihydroxy-3-methylbutanoate + NADP(+) = (2S)-2-acetolactate + NADPH + H(+)</text>
        <dbReference type="Rhea" id="RHEA:22068"/>
        <dbReference type="ChEBI" id="CHEBI:15378"/>
        <dbReference type="ChEBI" id="CHEBI:49072"/>
        <dbReference type="ChEBI" id="CHEBI:57783"/>
        <dbReference type="ChEBI" id="CHEBI:58349"/>
        <dbReference type="ChEBI" id="CHEBI:58476"/>
        <dbReference type="EC" id="1.1.1.86"/>
    </reaction>
</comment>
<comment type="catalytic activity">
    <reaction evidence="1">
        <text>(2R,3R)-2,3-dihydroxy-3-methylpentanoate + NADP(+) = (S)-2-ethyl-2-hydroxy-3-oxobutanoate + NADPH + H(+)</text>
        <dbReference type="Rhea" id="RHEA:13493"/>
        <dbReference type="ChEBI" id="CHEBI:15378"/>
        <dbReference type="ChEBI" id="CHEBI:49256"/>
        <dbReference type="ChEBI" id="CHEBI:49258"/>
        <dbReference type="ChEBI" id="CHEBI:57783"/>
        <dbReference type="ChEBI" id="CHEBI:58349"/>
        <dbReference type="EC" id="1.1.1.86"/>
    </reaction>
</comment>
<comment type="cofactor">
    <cofactor evidence="1">
        <name>Mg(2+)</name>
        <dbReference type="ChEBI" id="CHEBI:18420"/>
    </cofactor>
    <text evidence="1">Binds 2 magnesium ions per subunit.</text>
</comment>
<comment type="pathway">
    <text evidence="1">Amino-acid biosynthesis; L-isoleucine biosynthesis; L-isoleucine from 2-oxobutanoate: step 2/4.</text>
</comment>
<comment type="pathway">
    <text evidence="1">Amino-acid biosynthesis; L-valine biosynthesis; L-valine from pyruvate: step 2/4.</text>
</comment>
<comment type="similarity">
    <text evidence="1">Belongs to the ketol-acid reductoisomerase family.</text>
</comment>
<proteinExistence type="inferred from homology"/>
<evidence type="ECO:0000255" key="1">
    <source>
        <dbReference type="HAMAP-Rule" id="MF_00435"/>
    </source>
</evidence>
<evidence type="ECO:0000255" key="2">
    <source>
        <dbReference type="PROSITE-ProRule" id="PRU01197"/>
    </source>
</evidence>
<evidence type="ECO:0000255" key="3">
    <source>
        <dbReference type="PROSITE-ProRule" id="PRU01198"/>
    </source>
</evidence>
<name>ILVC_SOLUE</name>
<protein>
    <recommendedName>
        <fullName evidence="1">Ketol-acid reductoisomerase (NADP(+))</fullName>
        <shortName evidence="1">KARI</shortName>
        <ecNumber evidence="1">1.1.1.86</ecNumber>
    </recommendedName>
    <alternativeName>
        <fullName evidence="1">Acetohydroxy-acid isomeroreductase</fullName>
        <shortName evidence="1">AHIR</shortName>
    </alternativeName>
    <alternativeName>
        <fullName evidence="1">Alpha-keto-beta-hydroxylacyl reductoisomerase</fullName>
    </alternativeName>
    <alternativeName>
        <fullName evidence="1">Ketol-acid reductoisomerase type 1</fullName>
    </alternativeName>
    <alternativeName>
        <fullName evidence="1">Ketol-acid reductoisomerase type I</fullName>
    </alternativeName>
</protein>
<keyword id="KW-0028">Amino-acid biosynthesis</keyword>
<keyword id="KW-0100">Branched-chain amino acid biosynthesis</keyword>
<keyword id="KW-0460">Magnesium</keyword>
<keyword id="KW-0479">Metal-binding</keyword>
<keyword id="KW-0521">NADP</keyword>
<keyword id="KW-0560">Oxidoreductase</keyword>